<reference key="1">
    <citation type="journal article" date="1985" name="Bioorg. Khim.">
        <title>Primary structure of a full-size DNA copy of the influenza virus A/Kiev/59/79 (H1N1) neuraminidase gene.</title>
        <authorList>
            <person name="Beklemishev A.B."/>
            <person name="Blinov V.M."/>
            <person name="Vassilenko S.K."/>
            <person name="Golovin S.Y."/>
            <person name="Karginov V.A."/>
            <person name="Mamayev L.V."/>
            <person name="Netesov S.V."/>
            <person name="Petrov N.A."/>
            <person name="Safronov P.F."/>
        </authorList>
    </citation>
    <scope>NUCLEOTIDE SEQUENCE [GENOMIC RNA]</scope>
</reference>
<reference key="2">
    <citation type="journal article" date="2004" name="Virus Res.">
        <title>Assembly and budding of influenza virus.</title>
        <authorList>
            <person name="Nayak D.P."/>
            <person name="Hui E.K."/>
            <person name="Barman S."/>
        </authorList>
    </citation>
    <scope>REVIEW</scope>
</reference>
<reference key="3">
    <citation type="journal article" date="2005" name="N. Engl. J. Med.">
        <title>Neuraminidase inhibitors for influenza.</title>
        <authorList>
            <person name="Moscona A."/>
        </authorList>
    </citation>
    <scope>REVIEW</scope>
</reference>
<reference key="4">
    <citation type="journal article" date="2005" name="Biol. Pharm. Bull.">
        <title>Sialobiology of influenza: molecular mechanism of host range variation of influenza viruses.</title>
        <authorList>
            <person name="Suzuki Y."/>
        </authorList>
    </citation>
    <scope>REVIEW</scope>
</reference>
<organism>
    <name type="scientific">Influenza A virus (strain A/Kiev/59/1979 H1N1)</name>
    <dbReference type="NCBI Taxonomy" id="384495"/>
    <lineage>
        <taxon>Viruses</taxon>
        <taxon>Riboviria</taxon>
        <taxon>Orthornavirae</taxon>
        <taxon>Negarnaviricota</taxon>
        <taxon>Polyploviricotina</taxon>
        <taxon>Insthoviricetes</taxon>
        <taxon>Articulavirales</taxon>
        <taxon>Orthomyxoviridae</taxon>
        <taxon>Alphainfluenzavirus</taxon>
        <taxon>Alphainfluenzavirus influenzae</taxon>
        <taxon>Influenza A virus</taxon>
    </lineage>
</organism>
<name>NRAM_I79A4</name>
<organismHost>
    <name type="scientific">Aves</name>
    <dbReference type="NCBI Taxonomy" id="8782"/>
</organismHost>
<organismHost>
    <name type="scientific">Homo sapiens</name>
    <name type="common">Human</name>
    <dbReference type="NCBI Taxonomy" id="9606"/>
</organismHost>
<organismHost>
    <name type="scientific">Sus scrofa</name>
    <name type="common">Pig</name>
    <dbReference type="NCBI Taxonomy" id="9823"/>
</organismHost>
<accession>P31348</accession>
<feature type="chain" id="PRO_0000078703" description="Neuraminidase">
    <location>
        <begin position="1"/>
        <end position="470"/>
    </location>
</feature>
<feature type="topological domain" description="Intravirion" evidence="1">
    <location>
        <begin position="1"/>
        <end position="6"/>
    </location>
</feature>
<feature type="transmembrane region" description="Helical" evidence="1">
    <location>
        <begin position="7"/>
        <end position="27"/>
    </location>
</feature>
<feature type="topological domain" description="Virion surface" evidence="1">
    <location>
        <begin position="28"/>
        <end position="470"/>
    </location>
</feature>
<feature type="region of interest" description="Involved in apical transport and lipid raft association" evidence="1">
    <location>
        <begin position="11"/>
        <end position="33"/>
    </location>
</feature>
<feature type="region of interest" description="Hypervariable stalk region" evidence="1">
    <location>
        <begin position="36"/>
        <end position="90"/>
    </location>
</feature>
<feature type="region of interest" description="Head of neuraminidase" evidence="1">
    <location>
        <begin position="91"/>
        <end position="470"/>
    </location>
</feature>
<feature type="active site" description="Proton donor/acceptor" evidence="1">
    <location>
        <position position="151"/>
    </location>
</feature>
<feature type="active site" description="Nucleophile" evidence="1">
    <location>
        <position position="402"/>
    </location>
</feature>
<feature type="binding site" evidence="1">
    <location>
        <position position="118"/>
    </location>
    <ligand>
        <name>substrate</name>
    </ligand>
</feature>
<feature type="binding site" evidence="1">
    <location>
        <position position="152"/>
    </location>
    <ligand>
        <name>substrate</name>
    </ligand>
</feature>
<feature type="binding site" evidence="1">
    <location>
        <begin position="277"/>
        <end position="278"/>
    </location>
    <ligand>
        <name>substrate</name>
    </ligand>
</feature>
<feature type="binding site" evidence="1">
    <location>
        <position position="293"/>
    </location>
    <ligand>
        <name>substrate</name>
    </ligand>
</feature>
<feature type="binding site" evidence="1">
    <location>
        <position position="294"/>
    </location>
    <ligand>
        <name>Ca(2+)</name>
        <dbReference type="ChEBI" id="CHEBI:29108"/>
    </ligand>
</feature>
<feature type="binding site" evidence="1">
    <location>
        <position position="298"/>
    </location>
    <ligand>
        <name>Ca(2+)</name>
        <dbReference type="ChEBI" id="CHEBI:29108"/>
    </ligand>
</feature>
<feature type="binding site" evidence="1">
    <location>
        <position position="324"/>
    </location>
    <ligand>
        <name>Ca(2+)</name>
        <dbReference type="ChEBI" id="CHEBI:29108"/>
    </ligand>
</feature>
<feature type="binding site" evidence="1">
    <location>
        <position position="368"/>
    </location>
    <ligand>
        <name>substrate</name>
    </ligand>
</feature>
<feature type="glycosylation site" description="N-linked (GlcNAc...) asparagine; by host" evidence="1">
    <location>
        <position position="44"/>
    </location>
</feature>
<feature type="glycosylation site" description="N-linked (GlcNAc...) asparagine; by host" evidence="1">
    <location>
        <position position="58"/>
    </location>
</feature>
<feature type="glycosylation site" description="N-linked (GlcNAc...) asparagine; by host" evidence="1">
    <location>
        <position position="63"/>
    </location>
</feature>
<feature type="glycosylation site" description="N-linked (GlcNAc...) asparagine; by host" evidence="1">
    <location>
        <position position="68"/>
    </location>
</feature>
<feature type="glycosylation site" description="N-linked (GlcNAc...) asparagine; by host" evidence="1">
    <location>
        <position position="88"/>
    </location>
</feature>
<feature type="glycosylation site" description="N-linked (GlcNAc...) asparagine; by host" evidence="1">
    <location>
        <position position="146"/>
    </location>
</feature>
<feature type="glycosylation site" description="N-linked (GlcNAc...) asparagine; by host" evidence="1">
    <location>
        <position position="235"/>
    </location>
</feature>
<feature type="glycosylation site" description="N-linked (GlcNAc...) asparagine; by host" evidence="1">
    <location>
        <position position="285"/>
    </location>
</feature>
<feature type="glycosylation site" description="N-linked (GlcNAc...) asparagine; by host" evidence="1">
    <location>
        <position position="365"/>
    </location>
</feature>
<feature type="glycosylation site" description="N-linked (GlcNAc...) asparagine; by host" evidence="1">
    <location>
        <position position="455"/>
    </location>
</feature>
<feature type="disulfide bond" evidence="1">
    <location>
        <begin position="92"/>
        <end position="417"/>
    </location>
</feature>
<feature type="disulfide bond" evidence="1">
    <location>
        <begin position="124"/>
        <end position="129"/>
    </location>
</feature>
<feature type="disulfide bond" evidence="1">
    <location>
        <begin position="184"/>
        <end position="231"/>
    </location>
</feature>
<feature type="disulfide bond" evidence="1">
    <location>
        <begin position="233"/>
        <end position="238"/>
    </location>
</feature>
<feature type="disulfide bond" evidence="1">
    <location>
        <begin position="279"/>
        <end position="292"/>
    </location>
</feature>
<feature type="disulfide bond" evidence="1">
    <location>
        <begin position="281"/>
        <end position="290"/>
    </location>
</feature>
<feature type="disulfide bond" evidence="1">
    <location>
        <begin position="318"/>
        <end position="335"/>
    </location>
</feature>
<feature type="disulfide bond" evidence="1">
    <location>
        <begin position="421"/>
        <end position="447"/>
    </location>
</feature>
<comment type="function">
    <text evidence="1">Catalyzes the removal of terminal sialic acid residues from viral and cellular glycoconjugates. Cleaves off the terminal sialic acids on the glycosylated HA during virus budding to facilitate virus release. Additionally helps virus spread through the circulation by further removing sialic acids from the cell surface. These cleavages prevent self-aggregation and ensure the efficient spread of the progeny virus from cell to cell. Otherwise, infection would be limited to one round of replication. Described as a receptor-destroying enzyme because it cleaves a terminal sialic acid from the cellular receptors. May facilitate viral invasion of the upper airways by cleaving the sialic acid moieties on the mucin of the airway epithelial cells. Likely to plays a role in the budding process through its association with lipid rafts during intracellular transport. May additionally display a raft-association independent effect on budding. Plays a role in the determination of host range restriction on replication and virulence. Sialidase activity in late endosome/lysosome traffic seems to enhance virus replication.</text>
</comment>
<comment type="catalytic activity">
    <reaction evidence="1">
        <text>Hydrolysis of alpha-(2-&gt;3)-, alpha-(2-&gt;6)-, alpha-(2-&gt;8)- glycosidic linkages of terminal sialic acid residues in oligosaccharides, glycoproteins, glycolipids, colominic acid and synthetic substrates.</text>
        <dbReference type="EC" id="3.2.1.18"/>
    </reaction>
</comment>
<comment type="cofactor">
    <cofactor evidence="1">
        <name>Ca(2+)</name>
        <dbReference type="ChEBI" id="CHEBI:29108"/>
    </cofactor>
</comment>
<comment type="activity regulation">
    <text evidence="1">Inhibited by the neuraminidase inhibitors zanamivir (Relenza) and oseltamivir (Tamiflu). These drugs interfere with the release of progeny virus from infected cells and are effective against all influenza strains. Resistance to neuraminidase inhibitors is quite rare.</text>
</comment>
<comment type="subunit">
    <text evidence="1">Homotetramer.</text>
</comment>
<comment type="subcellular location">
    <subcellularLocation>
        <location evidence="1">Virion membrane</location>
    </subcellularLocation>
    <subcellularLocation>
        <location evidence="1">Host apical cell membrane</location>
        <topology evidence="1">Single-pass type II membrane protein</topology>
    </subcellularLocation>
    <text evidence="1">Preferentially accumulates at the apical plasma membrane in infected polarized epithelial cells, which is the virus assembly site. Uses lipid rafts for cell surface transport and apical sorting. In the virion, forms a mushroom-shaped spike on the surface of the membrane.</text>
</comment>
<comment type="domain">
    <text evidence="1">Intact N-terminus is essential for virion morphogenesis. Possesses two apical sorting signals, one in the ectodomain, which is likely to be a glycan, and the other in the transmembrane domain. The transmembrane domain also plays a role in lipid raft association.</text>
</comment>
<comment type="PTM">
    <text evidence="1">N-glycosylated.</text>
</comment>
<comment type="miscellaneous">
    <text>The influenza A genome consist of 8 RNA segments. Genetic variation of hemagglutinin and/or neuraminidase genes results in the emergence of new influenza strains. The mechanism of variation can be the result of point mutations or the result of genetic reassortment between segments of two different strains.</text>
</comment>
<comment type="similarity">
    <text evidence="1">Belongs to the glycosyl hydrolase 34 family.</text>
</comment>
<sequence>MNPNQKIITIGSICMAIGIISLILQIGNIISIWVSHSIQTGSQNHTGICNQRIITYENSTWVNQTYVNISNTNVVAGKDTTSMTLAGNSSLCPIRGWAIYSKDNSIRIGSKGDVFVIREPFISCSHLECRTFFLTQGALLNDKHSNGTVKDRSPYRALMSCPIGEAPSPYNSRFESVAWSASACHDGMGWLTIGISGPDDGAVAVLKYNGIITETIKSWRKQILRTQESECVCVNGSCFTIMTDGPSDGQASYRIFKIEKGKITKSIELDAPNSHYEECSCYPDNGTVMCVCRDNWHGSNRPWVSFNQNLDYQIGYICSGVFGDNPRPKDGKGSCDPVNVDGADGVKGFSYRYGNGVWIGRTKSNSSRKGFEMIWDPNGWTDTDSNFLVKQDVVAMTDWSGYSGSFVQHPELTGLDCMRPCFWVELIRGRPREKTTIWTSGSSISFCGVNSDTVNWSWPDGAELPFTIDK</sequence>
<proteinExistence type="inferred from homology"/>
<protein>
    <recommendedName>
        <fullName evidence="1">Neuraminidase</fullName>
        <ecNumber evidence="1">3.2.1.18</ecNumber>
    </recommendedName>
</protein>
<gene>
    <name evidence="1" type="primary">NA</name>
</gene>
<evidence type="ECO:0000255" key="1">
    <source>
        <dbReference type="HAMAP-Rule" id="MF_04071"/>
    </source>
</evidence>
<keyword id="KW-0106">Calcium</keyword>
<keyword id="KW-1015">Disulfide bond</keyword>
<keyword id="KW-0325">Glycoprotein</keyword>
<keyword id="KW-0326">Glycosidase</keyword>
<keyword id="KW-1032">Host cell membrane</keyword>
<keyword id="KW-1043">Host membrane</keyword>
<keyword id="KW-0378">Hydrolase</keyword>
<keyword id="KW-0472">Membrane</keyword>
<keyword id="KW-0479">Metal-binding</keyword>
<keyword id="KW-0735">Signal-anchor</keyword>
<keyword id="KW-0812">Transmembrane</keyword>
<keyword id="KW-1133">Transmembrane helix</keyword>
<keyword id="KW-0946">Virion</keyword>
<dbReference type="EC" id="3.2.1.18" evidence="1"/>
<dbReference type="EMBL" id="M38335">
    <property type="protein sequence ID" value="AAA43435.1"/>
    <property type="molecule type" value="Genomic_RNA"/>
</dbReference>
<dbReference type="SMR" id="P31348"/>
<dbReference type="CAZy" id="GH34">
    <property type="family name" value="Glycoside Hydrolase Family 34"/>
</dbReference>
<dbReference type="GlyCosmos" id="P31348">
    <property type="glycosylation" value="10 sites, No reported glycans"/>
</dbReference>
<dbReference type="GO" id="GO:0020002">
    <property type="term" value="C:host cell plasma membrane"/>
    <property type="evidence" value="ECO:0007669"/>
    <property type="project" value="UniProtKB-SubCell"/>
</dbReference>
<dbReference type="GO" id="GO:0016020">
    <property type="term" value="C:membrane"/>
    <property type="evidence" value="ECO:0007669"/>
    <property type="project" value="UniProtKB-UniRule"/>
</dbReference>
<dbReference type="GO" id="GO:0055036">
    <property type="term" value="C:virion membrane"/>
    <property type="evidence" value="ECO:0007669"/>
    <property type="project" value="UniProtKB-SubCell"/>
</dbReference>
<dbReference type="GO" id="GO:0004308">
    <property type="term" value="F:exo-alpha-sialidase activity"/>
    <property type="evidence" value="ECO:0007669"/>
    <property type="project" value="UniProtKB-UniRule"/>
</dbReference>
<dbReference type="GO" id="GO:0046872">
    <property type="term" value="F:metal ion binding"/>
    <property type="evidence" value="ECO:0007669"/>
    <property type="project" value="UniProtKB-UniRule"/>
</dbReference>
<dbReference type="GO" id="GO:0005975">
    <property type="term" value="P:carbohydrate metabolic process"/>
    <property type="evidence" value="ECO:0007669"/>
    <property type="project" value="InterPro"/>
</dbReference>
<dbReference type="GO" id="GO:0046761">
    <property type="term" value="P:viral budding from plasma membrane"/>
    <property type="evidence" value="ECO:0007669"/>
    <property type="project" value="UniProtKB-UniRule"/>
</dbReference>
<dbReference type="CDD" id="cd15483">
    <property type="entry name" value="Influenza_NA"/>
    <property type="match status" value="1"/>
</dbReference>
<dbReference type="FunFam" id="2.120.10.10:FF:000001">
    <property type="entry name" value="Neuraminidase"/>
    <property type="match status" value="1"/>
</dbReference>
<dbReference type="Gene3D" id="2.120.10.10">
    <property type="match status" value="1"/>
</dbReference>
<dbReference type="HAMAP" id="MF_04071">
    <property type="entry name" value="INFV_NRAM"/>
    <property type="match status" value="1"/>
</dbReference>
<dbReference type="InterPro" id="IPR001860">
    <property type="entry name" value="Glyco_hydro_34"/>
</dbReference>
<dbReference type="InterPro" id="IPR033654">
    <property type="entry name" value="Sialidase_Influenza_A/B"/>
</dbReference>
<dbReference type="InterPro" id="IPR036278">
    <property type="entry name" value="Sialidase_sf"/>
</dbReference>
<dbReference type="Pfam" id="PF00064">
    <property type="entry name" value="Neur"/>
    <property type="match status" value="1"/>
</dbReference>
<dbReference type="SUPFAM" id="SSF50939">
    <property type="entry name" value="Sialidases"/>
    <property type="match status" value="1"/>
</dbReference>